<dbReference type="EC" id="7.1.1.-" evidence="1"/>
<dbReference type="EMBL" id="AE000657">
    <property type="protein sequence ID" value="AAC07299.1"/>
    <property type="molecule type" value="Genomic_DNA"/>
</dbReference>
<dbReference type="PIR" id="E70413">
    <property type="entry name" value="E70413"/>
</dbReference>
<dbReference type="RefSeq" id="NP_213900.1">
    <property type="nucleotide sequence ID" value="NC_000918.1"/>
</dbReference>
<dbReference type="RefSeq" id="WP_010880838.1">
    <property type="nucleotide sequence ID" value="NC_000918.1"/>
</dbReference>
<dbReference type="SMR" id="O67336"/>
<dbReference type="FunCoup" id="O67336">
    <property type="interactions" value="164"/>
</dbReference>
<dbReference type="STRING" id="224324.aq_1315"/>
<dbReference type="EnsemblBacteria" id="AAC07299">
    <property type="protein sequence ID" value="AAC07299"/>
    <property type="gene ID" value="aq_1315"/>
</dbReference>
<dbReference type="KEGG" id="aae:aq_1315"/>
<dbReference type="PATRIC" id="fig|224324.8.peg.1024"/>
<dbReference type="eggNOG" id="COG1005">
    <property type="taxonomic scope" value="Bacteria"/>
</dbReference>
<dbReference type="HOGENOM" id="CLU_015134_0_1_0"/>
<dbReference type="InParanoid" id="O67336"/>
<dbReference type="OrthoDB" id="9803734at2"/>
<dbReference type="Proteomes" id="UP000000798">
    <property type="component" value="Chromosome"/>
</dbReference>
<dbReference type="GO" id="GO:0005886">
    <property type="term" value="C:plasma membrane"/>
    <property type="evidence" value="ECO:0007669"/>
    <property type="project" value="UniProtKB-SubCell"/>
</dbReference>
<dbReference type="GO" id="GO:0016655">
    <property type="term" value="F:oxidoreductase activity, acting on NAD(P)H, quinone or similar compound as acceptor"/>
    <property type="evidence" value="ECO:0007669"/>
    <property type="project" value="UniProtKB-UniRule"/>
</dbReference>
<dbReference type="GO" id="GO:0048038">
    <property type="term" value="F:quinone binding"/>
    <property type="evidence" value="ECO:0007669"/>
    <property type="project" value="UniProtKB-KW"/>
</dbReference>
<dbReference type="GO" id="GO:0009060">
    <property type="term" value="P:aerobic respiration"/>
    <property type="evidence" value="ECO:0000318"/>
    <property type="project" value="GO_Central"/>
</dbReference>
<dbReference type="HAMAP" id="MF_01350">
    <property type="entry name" value="NDH1_NuoH"/>
    <property type="match status" value="1"/>
</dbReference>
<dbReference type="InterPro" id="IPR001694">
    <property type="entry name" value="NADH_UbQ_OxRdtase_su1/FPO"/>
</dbReference>
<dbReference type="InterPro" id="IPR018086">
    <property type="entry name" value="NADH_UbQ_OxRdtase_su1_CS"/>
</dbReference>
<dbReference type="NCBIfam" id="NF004741">
    <property type="entry name" value="PRK06076.1-2"/>
    <property type="match status" value="1"/>
</dbReference>
<dbReference type="PANTHER" id="PTHR11432">
    <property type="entry name" value="NADH DEHYDROGENASE SUBUNIT 1"/>
    <property type="match status" value="1"/>
</dbReference>
<dbReference type="PANTHER" id="PTHR11432:SF3">
    <property type="entry name" value="NADH-UBIQUINONE OXIDOREDUCTASE CHAIN 1"/>
    <property type="match status" value="1"/>
</dbReference>
<dbReference type="Pfam" id="PF00146">
    <property type="entry name" value="NADHdh"/>
    <property type="match status" value="1"/>
</dbReference>
<dbReference type="PROSITE" id="PS00667">
    <property type="entry name" value="COMPLEX1_ND1_1"/>
    <property type="match status" value="1"/>
</dbReference>
<gene>
    <name evidence="1" type="primary">nuoH</name>
    <name type="ordered locus">aq_1315</name>
</gene>
<reference key="1">
    <citation type="journal article" date="1998" name="Nature">
        <title>The complete genome of the hyperthermophilic bacterium Aquifex aeolicus.</title>
        <authorList>
            <person name="Deckert G."/>
            <person name="Warren P.V."/>
            <person name="Gaasterland T."/>
            <person name="Young W.G."/>
            <person name="Lenox A.L."/>
            <person name="Graham D.E."/>
            <person name="Overbeek R."/>
            <person name="Snead M.A."/>
            <person name="Keller M."/>
            <person name="Aujay M."/>
            <person name="Huber R."/>
            <person name="Feldman R.A."/>
            <person name="Short J.M."/>
            <person name="Olsen G.J."/>
            <person name="Swanson R.V."/>
        </authorList>
    </citation>
    <scope>NUCLEOTIDE SEQUENCE [LARGE SCALE GENOMIC DNA]</scope>
    <source>
        <strain>VF5</strain>
    </source>
</reference>
<organism>
    <name type="scientific">Aquifex aeolicus (strain VF5)</name>
    <dbReference type="NCBI Taxonomy" id="224324"/>
    <lineage>
        <taxon>Bacteria</taxon>
        <taxon>Pseudomonadati</taxon>
        <taxon>Aquificota</taxon>
        <taxon>Aquificia</taxon>
        <taxon>Aquificales</taxon>
        <taxon>Aquificaceae</taxon>
        <taxon>Aquifex</taxon>
    </lineage>
</organism>
<protein>
    <recommendedName>
        <fullName evidence="1">NADH-quinone oxidoreductase subunit H</fullName>
        <ecNumber evidence="1">7.1.1.-</ecNumber>
    </recommendedName>
    <alternativeName>
        <fullName evidence="1">NADH dehydrogenase I subunit H</fullName>
    </alternativeName>
    <alternativeName>
        <fullName evidence="1">NDH-1 subunit H</fullName>
    </alternativeName>
</protein>
<name>NUOH_AQUAE</name>
<keyword id="KW-0997">Cell inner membrane</keyword>
<keyword id="KW-1003">Cell membrane</keyword>
<keyword id="KW-0472">Membrane</keyword>
<keyword id="KW-0520">NAD</keyword>
<keyword id="KW-0874">Quinone</keyword>
<keyword id="KW-1185">Reference proteome</keyword>
<keyword id="KW-1278">Translocase</keyword>
<keyword id="KW-0812">Transmembrane</keyword>
<keyword id="KW-1133">Transmembrane helix</keyword>
<keyword id="KW-0830">Ubiquinone</keyword>
<accession>O67336</accession>
<feature type="chain" id="PRO_0000240053" description="NADH-quinone oxidoreductase subunit H">
    <location>
        <begin position="1"/>
        <end position="336"/>
    </location>
</feature>
<feature type="transmembrane region" description="Helical" evidence="1">
    <location>
        <begin position="12"/>
        <end position="32"/>
    </location>
</feature>
<feature type="transmembrane region" description="Helical" evidence="1">
    <location>
        <begin position="84"/>
        <end position="104"/>
    </location>
</feature>
<feature type="transmembrane region" description="Helical" evidence="1">
    <location>
        <begin position="118"/>
        <end position="138"/>
    </location>
</feature>
<feature type="transmembrane region" description="Helical" evidence="1">
    <location>
        <begin position="156"/>
        <end position="176"/>
    </location>
</feature>
<feature type="transmembrane region" description="Helical" evidence="1">
    <location>
        <begin position="193"/>
        <end position="213"/>
    </location>
</feature>
<feature type="transmembrane region" description="Helical" evidence="1">
    <location>
        <begin position="247"/>
        <end position="267"/>
    </location>
</feature>
<feature type="transmembrane region" description="Helical" evidence="1">
    <location>
        <begin position="274"/>
        <end position="294"/>
    </location>
</feature>
<feature type="transmembrane region" description="Helical" evidence="1">
    <location>
        <begin position="313"/>
        <end position="333"/>
    </location>
</feature>
<sequence length="336" mass="36923">MEAIAYSLAFTFLKIVIVFSLALGIGAYLTWFERKLAGHIQNRLGPTVVGKFGILQPLADALKLATKEVIIPRGADKPVYYAAVVMALVPSILLLTIIPFGPGFRVGNTYIEPIIADVNIALLLAFAFGSLSVYGTIFSGWASNSKYAFIGSLRKAAVVIAYEVVLGFSVLGVILLAGTLSTVGIVEAQIQKGVWFIFYQPVAFILYLFCMLAESGRVPFDIQEAEAELVTGYNVEYGGMKFGAFPLAEWYVNVIALSAIAVVLFFGGWDGPHIFGPLSPYFWFVFKTFALVFFTLWLHWTLPRFQAKDITEIAWKILLPIAILNVIITAVVVYAF</sequence>
<comment type="function">
    <text evidence="1">NDH-1 shuttles electrons from NADH, via FMN and iron-sulfur (Fe-S) centers, to quinones in the respiratory chain. The immediate electron acceptor for the enzyme in this species is believed to be ubiquinone. Couples the redox reaction to proton translocation (for every two electrons transferred, four hydrogen ions are translocated across the cytoplasmic membrane), and thus conserves the redox energy in a proton gradient. This subunit may bind ubiquinone.</text>
</comment>
<comment type="catalytic activity">
    <reaction evidence="1">
        <text>a quinone + NADH + 5 H(+)(in) = a quinol + NAD(+) + 4 H(+)(out)</text>
        <dbReference type="Rhea" id="RHEA:57888"/>
        <dbReference type="ChEBI" id="CHEBI:15378"/>
        <dbReference type="ChEBI" id="CHEBI:24646"/>
        <dbReference type="ChEBI" id="CHEBI:57540"/>
        <dbReference type="ChEBI" id="CHEBI:57945"/>
        <dbReference type="ChEBI" id="CHEBI:132124"/>
    </reaction>
</comment>
<comment type="subunit">
    <text evidence="1">NDH-1 is composed of 14 different subunits. Subunits NuoA, H, J, K, L, M, N constitute the membrane sector of the complex.</text>
</comment>
<comment type="subcellular location">
    <subcellularLocation>
        <location evidence="1">Cell inner membrane</location>
        <topology evidence="1">Multi-pass membrane protein</topology>
    </subcellularLocation>
</comment>
<comment type="similarity">
    <text evidence="1">Belongs to the complex I subunit 1 family.</text>
</comment>
<proteinExistence type="inferred from homology"/>
<evidence type="ECO:0000255" key="1">
    <source>
        <dbReference type="HAMAP-Rule" id="MF_01350"/>
    </source>
</evidence>